<keyword id="KW-0963">Cytoplasm</keyword>
<keyword id="KW-0521">NADP</keyword>
<keyword id="KW-0560">Oxidoreductase</keyword>
<keyword id="KW-0671">Queuosine biosynthesis</keyword>
<organism>
    <name type="scientific">Porphyromonas gingivalis (strain ATCC 33277 / DSM 20709 / CIP 103683 / JCM 12257 / NCTC 11834 / 2561)</name>
    <dbReference type="NCBI Taxonomy" id="431947"/>
    <lineage>
        <taxon>Bacteria</taxon>
        <taxon>Pseudomonadati</taxon>
        <taxon>Bacteroidota</taxon>
        <taxon>Bacteroidia</taxon>
        <taxon>Bacteroidales</taxon>
        <taxon>Porphyromonadaceae</taxon>
        <taxon>Porphyromonas</taxon>
    </lineage>
</organism>
<gene>
    <name evidence="1" type="primary">queF</name>
    <name type="ordered locus">PGN_1136</name>
</gene>
<dbReference type="EC" id="1.7.1.13" evidence="1"/>
<dbReference type="EMBL" id="AP009380">
    <property type="protein sequence ID" value="BAG33655.1"/>
    <property type="molecule type" value="Genomic_DNA"/>
</dbReference>
<dbReference type="RefSeq" id="WP_005874066.1">
    <property type="nucleotide sequence ID" value="NZ_CP025930.1"/>
</dbReference>
<dbReference type="SMR" id="B2RJW0"/>
<dbReference type="GeneID" id="29256342"/>
<dbReference type="KEGG" id="pgn:PGN_1136"/>
<dbReference type="eggNOG" id="COG0780">
    <property type="taxonomic scope" value="Bacteria"/>
</dbReference>
<dbReference type="HOGENOM" id="CLU_102489_0_1_10"/>
<dbReference type="OrthoDB" id="9795077at2"/>
<dbReference type="BioCyc" id="PGIN431947:G1G2V-1300-MONOMER"/>
<dbReference type="UniPathway" id="UPA00392"/>
<dbReference type="Proteomes" id="UP000008842">
    <property type="component" value="Chromosome"/>
</dbReference>
<dbReference type="GO" id="GO:0005737">
    <property type="term" value="C:cytoplasm"/>
    <property type="evidence" value="ECO:0007669"/>
    <property type="project" value="UniProtKB-SubCell"/>
</dbReference>
<dbReference type="GO" id="GO:0033739">
    <property type="term" value="F:preQ1 synthase activity"/>
    <property type="evidence" value="ECO:0007669"/>
    <property type="project" value="UniProtKB-UniRule"/>
</dbReference>
<dbReference type="GO" id="GO:0008616">
    <property type="term" value="P:queuosine biosynthetic process"/>
    <property type="evidence" value="ECO:0007669"/>
    <property type="project" value="UniProtKB-UniRule"/>
</dbReference>
<dbReference type="GO" id="GO:0006400">
    <property type="term" value="P:tRNA modification"/>
    <property type="evidence" value="ECO:0007669"/>
    <property type="project" value="UniProtKB-UniRule"/>
</dbReference>
<dbReference type="Gene3D" id="3.30.1130.10">
    <property type="match status" value="1"/>
</dbReference>
<dbReference type="HAMAP" id="MF_00818">
    <property type="entry name" value="QueF_type1"/>
    <property type="match status" value="1"/>
</dbReference>
<dbReference type="InterPro" id="IPR043133">
    <property type="entry name" value="GTP-CH-I_C/QueF"/>
</dbReference>
<dbReference type="InterPro" id="IPR050084">
    <property type="entry name" value="NADPH_dep_7-cyano-7-deazaG_red"/>
</dbReference>
<dbReference type="InterPro" id="IPR029500">
    <property type="entry name" value="QueF"/>
</dbReference>
<dbReference type="InterPro" id="IPR016856">
    <property type="entry name" value="QueF_type1"/>
</dbReference>
<dbReference type="NCBIfam" id="TIGR03139">
    <property type="entry name" value="QueF-II"/>
    <property type="match status" value="1"/>
</dbReference>
<dbReference type="PANTHER" id="PTHR34354">
    <property type="entry name" value="NADPH-DEPENDENT 7-CYANO-7-DEAZAGUANINE REDUCTASE"/>
    <property type="match status" value="1"/>
</dbReference>
<dbReference type="PANTHER" id="PTHR34354:SF1">
    <property type="entry name" value="NADPH-DEPENDENT 7-CYANO-7-DEAZAGUANINE REDUCTASE"/>
    <property type="match status" value="1"/>
</dbReference>
<dbReference type="Pfam" id="PF14489">
    <property type="entry name" value="QueF"/>
    <property type="match status" value="1"/>
</dbReference>
<dbReference type="PIRSF" id="PIRSF027377">
    <property type="entry name" value="Nitrile_oxidored_QueF"/>
    <property type="match status" value="1"/>
</dbReference>
<dbReference type="SUPFAM" id="SSF55620">
    <property type="entry name" value="Tetrahydrobiopterin biosynthesis enzymes-like"/>
    <property type="match status" value="1"/>
</dbReference>
<evidence type="ECO:0000255" key="1">
    <source>
        <dbReference type="HAMAP-Rule" id="MF_00818"/>
    </source>
</evidence>
<name>QUEF_PORG3</name>
<comment type="function">
    <text evidence="1">Catalyzes the NADPH-dependent reduction of 7-cyano-7-deazaguanine (preQ0) to 7-aminomethyl-7-deazaguanine (preQ1).</text>
</comment>
<comment type="catalytic activity">
    <reaction evidence="1">
        <text>7-aminomethyl-7-carbaguanine + 2 NADP(+) = 7-cyano-7-deazaguanine + 2 NADPH + 3 H(+)</text>
        <dbReference type="Rhea" id="RHEA:13409"/>
        <dbReference type="ChEBI" id="CHEBI:15378"/>
        <dbReference type="ChEBI" id="CHEBI:45075"/>
        <dbReference type="ChEBI" id="CHEBI:57783"/>
        <dbReference type="ChEBI" id="CHEBI:58349"/>
        <dbReference type="ChEBI" id="CHEBI:58703"/>
        <dbReference type="EC" id="1.7.1.13"/>
    </reaction>
</comment>
<comment type="pathway">
    <text evidence="1">tRNA modification; tRNA-queuosine biosynthesis.</text>
</comment>
<comment type="subcellular location">
    <subcellularLocation>
        <location evidence="1">Cytoplasm</location>
    </subcellularLocation>
</comment>
<comment type="similarity">
    <text evidence="1">Belongs to the GTP cyclohydrolase I family. QueF type 1 subfamily.</text>
</comment>
<protein>
    <recommendedName>
        <fullName evidence="1">NADPH-dependent 7-cyano-7-deazaguanine reductase</fullName>
        <ecNumber evidence="1">1.7.1.13</ecNumber>
    </recommendedName>
    <alternativeName>
        <fullName evidence="1">7-cyano-7-carbaguanine reductase</fullName>
    </alternativeName>
    <alternativeName>
        <fullName evidence="1">NADPH-dependent nitrile oxidoreductase</fullName>
    </alternativeName>
    <alternativeName>
        <fullName evidence="1">PreQ(0) reductase</fullName>
    </alternativeName>
</protein>
<accession>B2RJW0</accession>
<reference key="1">
    <citation type="journal article" date="2008" name="DNA Res.">
        <title>Determination of the genome sequence of Porphyromonas gingivalis strain ATCC 33277 and genomic comparison with strain W83 revealed extensive genome rearrangements in P. gingivalis.</title>
        <authorList>
            <person name="Naito M."/>
            <person name="Hirakawa H."/>
            <person name="Yamashita A."/>
            <person name="Ohara N."/>
            <person name="Shoji M."/>
            <person name="Yukitake H."/>
            <person name="Nakayama K."/>
            <person name="Toh H."/>
            <person name="Yoshimura F."/>
            <person name="Kuhara S."/>
            <person name="Hattori M."/>
            <person name="Hayashi T."/>
            <person name="Nakayama K."/>
        </authorList>
    </citation>
    <scope>NUCLEOTIDE SEQUENCE [LARGE SCALE GENOMIC DNA]</scope>
    <source>
        <strain>ATCC 33277 / DSM 20709 / CIP 103683 / JCM 12257 / NCTC 11834 / 2561</strain>
    </source>
</reference>
<feature type="chain" id="PRO_1000134308" description="NADPH-dependent 7-cyano-7-deazaguanine reductase">
    <location>
        <begin position="1"/>
        <end position="154"/>
    </location>
</feature>
<feature type="active site" description="Thioimide intermediate" evidence="1">
    <location>
        <position position="54"/>
    </location>
</feature>
<feature type="active site" description="Proton donor" evidence="1">
    <location>
        <position position="61"/>
    </location>
</feature>
<feature type="binding site" evidence="1">
    <location>
        <begin position="76"/>
        <end position="78"/>
    </location>
    <ligand>
        <name>substrate</name>
    </ligand>
</feature>
<feature type="binding site" evidence="1">
    <location>
        <begin position="95"/>
        <end position="96"/>
    </location>
    <ligand>
        <name>substrate</name>
    </ligand>
</feature>
<sequence length="154" mass="17924">MTGIREGEKELSLLGSKTEYRNDYAPEVLEAFTNKHQENDYWVRFNCPEFTSLCPITGQPDFATIYINYIPDVKMVESKSLKLYLFSFRNHGAFHEDCVNIIMKDLIALMQPRYIEVWGDFTPRGGISIVPFCNYGKPGSRYELLAEKRMETHH</sequence>
<proteinExistence type="inferred from homology"/>